<accession>P0A0B7</accession>
<accession>Q2G0Z6</accession>
<accession>Q53647</accession>
<feature type="initiator methionine" description="Removed" evidence="9">
    <location>
        <position position="1"/>
    </location>
</feature>
<feature type="chain" id="PRO_0000135128" description="Alkyl hydroperoxide reductase C">
    <location>
        <begin position="2"/>
        <end position="189"/>
    </location>
</feature>
<feature type="domain" description="Thioredoxin" evidence="3">
    <location>
        <begin position="2"/>
        <end position="159"/>
    </location>
</feature>
<feature type="active site" description="Cysteine sulfenic acid (-SOH) intermediate" evidence="1">
    <location>
        <position position="49"/>
    </location>
</feature>
<feature type="disulfide bond" description="Interchain (with C-168); in linked form" evidence="1">
    <location>
        <position position="49"/>
    </location>
</feature>
<feature type="disulfide bond" description="Interchain (with C-49); in linked form" evidence="1">
    <location>
        <position position="168"/>
    </location>
</feature>
<feature type="sequence conflict" description="In Ref. 1; AA sequence." evidence="7" ref="1">
    <original>S</original>
    <variation>G</variation>
    <location>
        <position position="2"/>
    </location>
</feature>
<feature type="sequence conflict" description="In Ref. 1; AA sequence." evidence="7" ref="1">
    <original>D</original>
    <variation>DD</variation>
    <location>
        <position position="17"/>
    </location>
</feature>
<name>AHPC_STAA8</name>
<comment type="function">
    <text evidence="5">Thiol-specific peroxidase that catalyzes the reduction of hydrogen peroxide and organic hydroperoxides to water and alcohols, respectively. Plays a role in cell protection against oxidative stress by detoxifying peroxides. Is important for survival under desiccation conditions. Not required for virulence although is necessary for nasal colonization.</text>
</comment>
<comment type="catalytic activity">
    <reaction evidence="1">
        <text>a hydroperoxide + NADH + H(+) = an alcohol + NAD(+) + H2O</text>
        <dbReference type="Rhea" id="RHEA:62628"/>
        <dbReference type="ChEBI" id="CHEBI:15377"/>
        <dbReference type="ChEBI" id="CHEBI:15378"/>
        <dbReference type="ChEBI" id="CHEBI:30879"/>
        <dbReference type="ChEBI" id="CHEBI:35924"/>
        <dbReference type="ChEBI" id="CHEBI:57540"/>
        <dbReference type="ChEBI" id="CHEBI:57945"/>
        <dbReference type="EC" id="1.11.1.26"/>
    </reaction>
</comment>
<comment type="subunit">
    <text evidence="1">Homodimer; disulfide-linked, upon oxidation. 5 homodimers assemble to form a ring-like decamer.</text>
</comment>
<comment type="subcellular location">
    <subcellularLocation>
        <location evidence="2">Cytoplasm</location>
    </subcellularLocation>
</comment>
<comment type="induction">
    <text evidence="4 6">Induced by iron and osmotic shock. Repressed under metal-depleted growth conditions and by manganese-rich growth conditions. Negatively regulated by the ferric uptake regulator (Fur) and PerR.</text>
</comment>
<comment type="miscellaneous">
    <text evidence="8">In S.aureus, the removal of hydrogen peroxide appears to occur predominately via KatA, with AhpC acting as an alternative.</text>
</comment>
<comment type="miscellaneous">
    <text evidence="1">The active site is a conserved redox-active cysteine residue, the peroxidatic cysteine (C(P)), which makes the nucleophilic attack on the peroxide substrate. The peroxide oxidizes the C(P)-SH to cysteine sulfenic acid (C(P)-SOH), which then reacts with another cysteine residue, the resolving cysteine (C(R)), to form a disulfide bridge. The disulfide is subsequently reduced by an appropriate electron donor to complete the catalytic cycle. In this typical 2-Cys peroxiredoxin, C(R) is provided by the other dimeric subunit to form an intersubunit disulfide. The disulfide is subsequently reduced by AhpF.</text>
</comment>
<comment type="similarity">
    <text evidence="7">Belongs to the peroxiredoxin family. AhpC/Prx1 subfamily.</text>
</comment>
<dbReference type="EC" id="1.11.1.26" evidence="1"/>
<dbReference type="EMBL" id="U92441">
    <property type="protein sequence ID" value="AAB51151.1"/>
    <property type="molecule type" value="Genomic_DNA"/>
</dbReference>
<dbReference type="EMBL" id="CP000253">
    <property type="protein sequence ID" value="ABD29531.1"/>
    <property type="molecule type" value="Genomic_DNA"/>
</dbReference>
<dbReference type="PIR" id="S52934">
    <property type="entry name" value="S52934"/>
</dbReference>
<dbReference type="RefSeq" id="WP_000052781.1">
    <property type="nucleotide sequence ID" value="NZ_LS483365.1"/>
</dbReference>
<dbReference type="RefSeq" id="YP_498954.1">
    <property type="nucleotide sequence ID" value="NC_007795.1"/>
</dbReference>
<dbReference type="SMR" id="P0A0B7"/>
<dbReference type="STRING" id="93061.SAOUHSC_00365"/>
<dbReference type="PaxDb" id="1280-SAXN108_0431"/>
<dbReference type="GeneID" id="3919784"/>
<dbReference type="KEGG" id="sao:SAOUHSC_00365"/>
<dbReference type="PATRIC" id="fig|93061.5.peg.335"/>
<dbReference type="eggNOG" id="COG0450">
    <property type="taxonomic scope" value="Bacteria"/>
</dbReference>
<dbReference type="HOGENOM" id="CLU_042529_21_3_9"/>
<dbReference type="OrthoDB" id="9812811at2"/>
<dbReference type="PRO" id="PR:P0A0B7"/>
<dbReference type="Proteomes" id="UP000008816">
    <property type="component" value="Chromosome"/>
</dbReference>
<dbReference type="GO" id="GO:0005829">
    <property type="term" value="C:cytosol"/>
    <property type="evidence" value="ECO:0000318"/>
    <property type="project" value="GO_Central"/>
</dbReference>
<dbReference type="GO" id="GO:0102039">
    <property type="term" value="F:NADH-dependent peroxiredoxin activity"/>
    <property type="evidence" value="ECO:0007669"/>
    <property type="project" value="UniProtKB-EC"/>
</dbReference>
<dbReference type="GO" id="GO:0008379">
    <property type="term" value="F:thioredoxin peroxidase activity"/>
    <property type="evidence" value="ECO:0000318"/>
    <property type="project" value="GO_Central"/>
</dbReference>
<dbReference type="GO" id="GO:0045454">
    <property type="term" value="P:cell redox homeostasis"/>
    <property type="evidence" value="ECO:0000318"/>
    <property type="project" value="GO_Central"/>
</dbReference>
<dbReference type="GO" id="GO:0042744">
    <property type="term" value="P:hydrogen peroxide catabolic process"/>
    <property type="evidence" value="ECO:0000318"/>
    <property type="project" value="GO_Central"/>
</dbReference>
<dbReference type="GO" id="GO:0006979">
    <property type="term" value="P:response to oxidative stress"/>
    <property type="evidence" value="ECO:0000318"/>
    <property type="project" value="GO_Central"/>
</dbReference>
<dbReference type="CDD" id="cd03015">
    <property type="entry name" value="PRX_Typ2cys"/>
    <property type="match status" value="1"/>
</dbReference>
<dbReference type="FunFam" id="3.40.30.10:FF:000002">
    <property type="entry name" value="Alkyl hydroperoxide reductase C"/>
    <property type="match status" value="1"/>
</dbReference>
<dbReference type="Gene3D" id="3.40.30.10">
    <property type="entry name" value="Glutaredoxin"/>
    <property type="match status" value="1"/>
</dbReference>
<dbReference type="InterPro" id="IPR017559">
    <property type="entry name" value="AhpC"/>
</dbReference>
<dbReference type="InterPro" id="IPR000866">
    <property type="entry name" value="AhpC/TSA"/>
</dbReference>
<dbReference type="InterPro" id="IPR050217">
    <property type="entry name" value="Peroxiredoxin"/>
</dbReference>
<dbReference type="InterPro" id="IPR024706">
    <property type="entry name" value="Peroxiredoxin_AhpC-typ"/>
</dbReference>
<dbReference type="InterPro" id="IPR019479">
    <property type="entry name" value="Peroxiredoxin_C"/>
</dbReference>
<dbReference type="InterPro" id="IPR036249">
    <property type="entry name" value="Thioredoxin-like_sf"/>
</dbReference>
<dbReference type="InterPro" id="IPR013766">
    <property type="entry name" value="Thioredoxin_domain"/>
</dbReference>
<dbReference type="NCBIfam" id="TIGR03137">
    <property type="entry name" value="AhpC"/>
    <property type="match status" value="1"/>
</dbReference>
<dbReference type="PANTHER" id="PTHR10681:SF121">
    <property type="entry name" value="ALKYL HYDROPEROXIDE REDUCTASE C"/>
    <property type="match status" value="1"/>
</dbReference>
<dbReference type="PANTHER" id="PTHR10681">
    <property type="entry name" value="THIOREDOXIN PEROXIDASE"/>
    <property type="match status" value="1"/>
</dbReference>
<dbReference type="Pfam" id="PF10417">
    <property type="entry name" value="1-cysPrx_C"/>
    <property type="match status" value="1"/>
</dbReference>
<dbReference type="Pfam" id="PF00578">
    <property type="entry name" value="AhpC-TSA"/>
    <property type="match status" value="1"/>
</dbReference>
<dbReference type="PIRSF" id="PIRSF000239">
    <property type="entry name" value="AHPC"/>
    <property type="match status" value="1"/>
</dbReference>
<dbReference type="SUPFAM" id="SSF52833">
    <property type="entry name" value="Thioredoxin-like"/>
    <property type="match status" value="1"/>
</dbReference>
<dbReference type="PROSITE" id="PS51352">
    <property type="entry name" value="THIOREDOXIN_2"/>
    <property type="match status" value="1"/>
</dbReference>
<protein>
    <recommendedName>
        <fullName>Alkyl hydroperoxide reductase C</fullName>
        <ecNumber evidence="1">1.11.1.26</ecNumber>
    </recommendedName>
    <alternativeName>
        <fullName>Peroxiredoxin</fullName>
    </alternativeName>
    <alternativeName>
        <fullName>Thioredoxin peroxidase</fullName>
    </alternativeName>
</protein>
<organism>
    <name type="scientific">Staphylococcus aureus (strain NCTC 8325 / PS 47)</name>
    <dbReference type="NCBI Taxonomy" id="93061"/>
    <lineage>
        <taxon>Bacteria</taxon>
        <taxon>Bacillati</taxon>
        <taxon>Bacillota</taxon>
        <taxon>Bacilli</taxon>
        <taxon>Bacillales</taxon>
        <taxon>Staphylococcaceae</taxon>
        <taxon>Staphylococcus</taxon>
    </lineage>
</organism>
<keyword id="KW-0049">Antioxidant</keyword>
<keyword id="KW-0963">Cytoplasm</keyword>
<keyword id="KW-0903">Direct protein sequencing</keyword>
<keyword id="KW-1015">Disulfide bond</keyword>
<keyword id="KW-0560">Oxidoreductase</keyword>
<keyword id="KW-0575">Peroxidase</keyword>
<keyword id="KW-0676">Redox-active center</keyword>
<keyword id="KW-1185">Reference proteome</keyword>
<proteinExistence type="evidence at protein level"/>
<sequence length="189" mass="20977">MSLINKEILPFTAQAFDPKKDQFKEVTQEDLKGSWSVVCFYPADFSFVCPTELEDLQNQYEELQKLGVNVFSVSTDTHFVHKAWHDHSDAISKITYTMIGDPSQTITRNFDVLDEATGLAQRGTFIIDPDGVVQASEINADGIGRDASTLAHKIKAAQYVRKNPGEVCPAKWEEGAKTLQPGLDLVGKI</sequence>
<reference key="1">
    <citation type="journal article" date="1995" name="Microbiology">
        <title>A homologue to the Escherichia coli alkyl hydroperoxide reductase AhpC is induced by osmotic upshock in Staphylococcus aureus.</title>
        <authorList>
            <person name="Armstrong-Buisseret L."/>
            <person name="Cole M.B."/>
            <person name="Stewart G.S.A.B."/>
        </authorList>
    </citation>
    <scope>NUCLEOTIDE SEQUENCE [GENOMIC DNA]</scope>
    <scope>PROTEIN SEQUENCE OF 2-20</scope>
    <scope>INDUCTION BY OSMOTIC UPSHOCK</scope>
</reference>
<reference key="2">
    <citation type="book" date="2006" name="Gram positive pathogens, 2nd edition">
        <title>The Staphylococcus aureus NCTC 8325 genome.</title>
        <editorList>
            <person name="Fischetti V."/>
            <person name="Novick R."/>
            <person name="Ferretti J."/>
            <person name="Portnoy D."/>
            <person name="Rood J."/>
        </editorList>
        <authorList>
            <person name="Gillaspy A.F."/>
            <person name="Worrell V."/>
            <person name="Orvis J."/>
            <person name="Roe B.A."/>
            <person name="Dyer D.W."/>
            <person name="Iandolo J.J."/>
        </authorList>
    </citation>
    <scope>NUCLEOTIDE SEQUENCE [LARGE SCALE GENOMIC DNA]</scope>
    <source>
        <strain>NCTC 8325 / PS 47</strain>
    </source>
</reference>
<reference key="3">
    <citation type="journal article" date="2004" name="Infect. Immun.">
        <title>The staphylococcal ferritins are differentially regulated in response to iron and manganese and via perR and fur.</title>
        <authorList>
            <person name="Morrissey J.A."/>
            <person name="Cockayne A."/>
            <person name="Brummell K."/>
            <person name="Williams P."/>
        </authorList>
    </citation>
    <scope>INDUCTION BY METALS</scope>
    <scope>REGULATION BY FUR AND PERR</scope>
</reference>
<reference key="4">
    <citation type="journal article" date="2007" name="J. Bacteriol.">
        <title>Catalase (katA) and alkyl hydroperoxide reductase (ahpC) have compensatory roles in peroxide stress resistance and are required for survival, persistence and nasal colonization in Staphylococcus aureus.</title>
        <authorList>
            <person name="Cosgrove K."/>
            <person name="Coutts G."/>
            <person name="Jonsson I.-M."/>
            <person name="Tarkowski A."/>
            <person name="Kokai-Kun J.F."/>
            <person name="Mond J.J."/>
            <person name="Foster S.J."/>
        </authorList>
    </citation>
    <scope>FUNCTION</scope>
    <scope>REGULATION BY PERR</scope>
</reference>
<gene>
    <name type="primary">ahpC</name>
    <name type="ordered locus">SAOUHSC_00365</name>
</gene>
<evidence type="ECO:0000250" key="1">
    <source>
        <dbReference type="UniProtKB" id="P0A251"/>
    </source>
</evidence>
<evidence type="ECO:0000250" key="2">
    <source>
        <dbReference type="UniProtKB" id="P0AE08"/>
    </source>
</evidence>
<evidence type="ECO:0000255" key="3">
    <source>
        <dbReference type="PROSITE-ProRule" id="PRU00691"/>
    </source>
</evidence>
<evidence type="ECO:0000269" key="4">
    <source>
    </source>
</evidence>
<evidence type="ECO:0000269" key="5">
    <source>
    </source>
</evidence>
<evidence type="ECO:0000269" key="6">
    <source>
    </source>
</evidence>
<evidence type="ECO:0000305" key="7"/>
<evidence type="ECO:0000305" key="8">
    <source>
    </source>
</evidence>
<evidence type="ECO:0000305" key="9">
    <source>
    </source>
</evidence>